<proteinExistence type="inferred from homology"/>
<organism>
    <name type="scientific">Shigella flexneri serotype 5b (strain 8401)</name>
    <dbReference type="NCBI Taxonomy" id="373384"/>
    <lineage>
        <taxon>Bacteria</taxon>
        <taxon>Pseudomonadati</taxon>
        <taxon>Pseudomonadota</taxon>
        <taxon>Gammaproteobacteria</taxon>
        <taxon>Enterobacterales</taxon>
        <taxon>Enterobacteriaceae</taxon>
        <taxon>Shigella</taxon>
    </lineage>
</organism>
<keyword id="KW-0963">Cytoplasm</keyword>
<keyword id="KW-0808">Transferase</keyword>
<protein>
    <recommendedName>
        <fullName evidence="1">Thiosulfate sulfurtransferase GlpE</fullName>
        <ecNumber evidence="1">2.8.1.1</ecNumber>
    </recommendedName>
</protein>
<dbReference type="EC" id="2.8.1.1" evidence="1"/>
<dbReference type="EMBL" id="CP000266">
    <property type="protein sequence ID" value="ABF05474.1"/>
    <property type="molecule type" value="Genomic_DNA"/>
</dbReference>
<dbReference type="RefSeq" id="WP_000371928.1">
    <property type="nucleotide sequence ID" value="NC_008258.1"/>
</dbReference>
<dbReference type="SMR" id="Q0SZP1"/>
<dbReference type="GeneID" id="93778571"/>
<dbReference type="KEGG" id="sfv:SFV_3432"/>
<dbReference type="HOGENOM" id="CLU_089574_14_0_6"/>
<dbReference type="Proteomes" id="UP000000659">
    <property type="component" value="Chromosome"/>
</dbReference>
<dbReference type="GO" id="GO:0005737">
    <property type="term" value="C:cytoplasm"/>
    <property type="evidence" value="ECO:0007669"/>
    <property type="project" value="UniProtKB-SubCell"/>
</dbReference>
<dbReference type="GO" id="GO:0004792">
    <property type="term" value="F:thiosulfate-cyanide sulfurtransferase activity"/>
    <property type="evidence" value="ECO:0007669"/>
    <property type="project" value="UniProtKB-UniRule"/>
</dbReference>
<dbReference type="GO" id="GO:0006071">
    <property type="term" value="P:glycerol metabolic process"/>
    <property type="evidence" value="ECO:0007669"/>
    <property type="project" value="UniProtKB-UniRule"/>
</dbReference>
<dbReference type="CDD" id="cd01444">
    <property type="entry name" value="GlpE_ST"/>
    <property type="match status" value="1"/>
</dbReference>
<dbReference type="FunFam" id="3.40.250.10:FF:000007">
    <property type="entry name" value="Thiosulfate sulfurtransferase GlpE"/>
    <property type="match status" value="1"/>
</dbReference>
<dbReference type="Gene3D" id="3.40.250.10">
    <property type="entry name" value="Rhodanese-like domain"/>
    <property type="match status" value="1"/>
</dbReference>
<dbReference type="HAMAP" id="MF_01009">
    <property type="entry name" value="Thiosulf_sulfurtr"/>
    <property type="match status" value="1"/>
</dbReference>
<dbReference type="InterPro" id="IPR050229">
    <property type="entry name" value="GlpE_sulfurtransferase"/>
</dbReference>
<dbReference type="InterPro" id="IPR001763">
    <property type="entry name" value="Rhodanese-like_dom"/>
</dbReference>
<dbReference type="InterPro" id="IPR036873">
    <property type="entry name" value="Rhodanese-like_dom_sf"/>
</dbReference>
<dbReference type="InterPro" id="IPR023695">
    <property type="entry name" value="Thiosulf_sulfurTrfase"/>
</dbReference>
<dbReference type="NCBIfam" id="NF001195">
    <property type="entry name" value="PRK00162.1"/>
    <property type="match status" value="1"/>
</dbReference>
<dbReference type="PANTHER" id="PTHR43031">
    <property type="entry name" value="FAD-DEPENDENT OXIDOREDUCTASE"/>
    <property type="match status" value="1"/>
</dbReference>
<dbReference type="PANTHER" id="PTHR43031:SF6">
    <property type="entry name" value="THIOSULFATE SULFURTRANSFERASE GLPE"/>
    <property type="match status" value="1"/>
</dbReference>
<dbReference type="Pfam" id="PF00581">
    <property type="entry name" value="Rhodanese"/>
    <property type="match status" value="1"/>
</dbReference>
<dbReference type="SMART" id="SM00450">
    <property type="entry name" value="RHOD"/>
    <property type="match status" value="1"/>
</dbReference>
<dbReference type="SUPFAM" id="SSF52821">
    <property type="entry name" value="Rhodanese/Cell cycle control phosphatase"/>
    <property type="match status" value="1"/>
</dbReference>
<dbReference type="PROSITE" id="PS50206">
    <property type="entry name" value="RHODANESE_3"/>
    <property type="match status" value="1"/>
</dbReference>
<feature type="chain" id="PRO_1000062979" description="Thiosulfate sulfurtransferase GlpE">
    <location>
        <begin position="1"/>
        <end position="108"/>
    </location>
</feature>
<feature type="domain" description="Rhodanese" evidence="1">
    <location>
        <begin position="17"/>
        <end position="105"/>
    </location>
</feature>
<feature type="active site" description="Cysteine persulfide intermediate" evidence="1">
    <location>
        <position position="65"/>
    </location>
</feature>
<evidence type="ECO:0000255" key="1">
    <source>
        <dbReference type="HAMAP-Rule" id="MF_01009"/>
    </source>
</evidence>
<reference key="1">
    <citation type="journal article" date="2006" name="BMC Genomics">
        <title>Complete genome sequence of Shigella flexneri 5b and comparison with Shigella flexneri 2a.</title>
        <authorList>
            <person name="Nie H."/>
            <person name="Yang F."/>
            <person name="Zhang X."/>
            <person name="Yang J."/>
            <person name="Chen L."/>
            <person name="Wang J."/>
            <person name="Xiong Z."/>
            <person name="Peng J."/>
            <person name="Sun L."/>
            <person name="Dong J."/>
            <person name="Xue Y."/>
            <person name="Xu X."/>
            <person name="Chen S."/>
            <person name="Yao Z."/>
            <person name="Shen Y."/>
            <person name="Jin Q."/>
        </authorList>
    </citation>
    <scope>NUCLEOTIDE SEQUENCE [LARGE SCALE GENOMIC DNA]</scope>
    <source>
        <strain>8401</strain>
    </source>
</reference>
<accession>Q0SZP1</accession>
<gene>
    <name evidence="1" type="primary">glpE</name>
    <name type="ordered locus">SFV_3432</name>
</gene>
<name>GLPE_SHIF8</name>
<comment type="function">
    <text evidence="1">Transferase that catalyzes the transfer of sulfur from thiosulfate to thiophilic acceptors such as cyanide or dithiols. May function in a CysM-independent thiosulfate assimilation pathway by catalyzing the conversion of thiosulfate to sulfite, which can then be used for L-cysteine biosynthesis.</text>
</comment>
<comment type="catalytic activity">
    <reaction evidence="1">
        <text>thiosulfate + hydrogen cyanide = thiocyanate + sulfite + 2 H(+)</text>
        <dbReference type="Rhea" id="RHEA:16881"/>
        <dbReference type="ChEBI" id="CHEBI:15378"/>
        <dbReference type="ChEBI" id="CHEBI:17359"/>
        <dbReference type="ChEBI" id="CHEBI:18022"/>
        <dbReference type="ChEBI" id="CHEBI:18407"/>
        <dbReference type="ChEBI" id="CHEBI:33542"/>
        <dbReference type="EC" id="2.8.1.1"/>
    </reaction>
</comment>
<comment type="catalytic activity">
    <reaction evidence="1">
        <text>thiosulfate + [thioredoxin]-dithiol = [thioredoxin]-disulfide + hydrogen sulfide + sulfite + 2 H(+)</text>
        <dbReference type="Rhea" id="RHEA:83859"/>
        <dbReference type="Rhea" id="RHEA-COMP:10698"/>
        <dbReference type="Rhea" id="RHEA-COMP:10700"/>
        <dbReference type="ChEBI" id="CHEBI:15378"/>
        <dbReference type="ChEBI" id="CHEBI:17359"/>
        <dbReference type="ChEBI" id="CHEBI:29919"/>
        <dbReference type="ChEBI" id="CHEBI:29950"/>
        <dbReference type="ChEBI" id="CHEBI:33542"/>
        <dbReference type="ChEBI" id="CHEBI:50058"/>
    </reaction>
</comment>
<comment type="subcellular location">
    <subcellularLocation>
        <location evidence="1">Cytoplasm</location>
    </subcellularLocation>
</comment>
<comment type="similarity">
    <text evidence="1">Belongs to the GlpE family.</text>
</comment>
<sequence length="108" mass="12082">MDQFECINVADAHQKLQEKEAVLVDIRDPQSFAMGHAVQAFHLTNDTLGAFMRDNDFDTPVMVMCYHGNSSKGAAQYLLQQGYDVVYSIDGGFEAWQRQFPAEVAYGA</sequence>